<accession>Q7TXK8</accession>
<accession>A0A1R3Y2P2</accession>
<accession>X2BMA9</accession>
<keyword id="KW-0012">Acyltransferase</keyword>
<keyword id="KW-0276">Fatty acid metabolism</keyword>
<keyword id="KW-0443">Lipid metabolism</keyword>
<keyword id="KW-0511">Multifunctional enzyme</keyword>
<keyword id="KW-0596">Phosphopantetheine</keyword>
<keyword id="KW-0597">Phosphoprotein</keyword>
<keyword id="KW-1185">Reference proteome</keyword>
<keyword id="KW-0808">Transferase</keyword>
<dbReference type="EC" id="2.3.1.41"/>
<dbReference type="EMBL" id="LT708304">
    <property type="protein sequence ID" value="SIU01593.1"/>
    <property type="molecule type" value="Genomic_DNA"/>
</dbReference>
<dbReference type="RefSeq" id="NP_856616.1">
    <property type="nucleotide sequence ID" value="NC_002945.3"/>
</dbReference>
<dbReference type="SMR" id="Q7TXK8"/>
<dbReference type="KEGG" id="mbo:BQ2027_MB2971C"/>
<dbReference type="PATRIC" id="fig|233413.5.peg.3263"/>
<dbReference type="BioCyc" id="MetaCyc:MONOMER-17228"/>
<dbReference type="UniPathway" id="UPA00094"/>
<dbReference type="Proteomes" id="UP000001419">
    <property type="component" value="Chromosome"/>
</dbReference>
<dbReference type="GO" id="GO:0034081">
    <property type="term" value="C:polyketide synthase complex"/>
    <property type="evidence" value="ECO:0000315"/>
    <property type="project" value="UniProtKB"/>
</dbReference>
<dbReference type="GO" id="GO:0004315">
    <property type="term" value="F:3-oxoacyl-[acyl-carrier-protein] synthase activity"/>
    <property type="evidence" value="ECO:0007669"/>
    <property type="project" value="UniProtKB-EC"/>
</dbReference>
<dbReference type="GO" id="GO:0004312">
    <property type="term" value="F:fatty acid synthase activity"/>
    <property type="evidence" value="ECO:0007669"/>
    <property type="project" value="TreeGrafter"/>
</dbReference>
<dbReference type="GO" id="GO:0016491">
    <property type="term" value="F:oxidoreductase activity"/>
    <property type="evidence" value="ECO:0007669"/>
    <property type="project" value="InterPro"/>
</dbReference>
<dbReference type="GO" id="GO:0031177">
    <property type="term" value="F:phosphopantetheine binding"/>
    <property type="evidence" value="ECO:0007669"/>
    <property type="project" value="InterPro"/>
</dbReference>
<dbReference type="GO" id="GO:0071766">
    <property type="term" value="P:Actinobacterium-type cell wall biogenesis"/>
    <property type="evidence" value="ECO:0000315"/>
    <property type="project" value="UniProtKB"/>
</dbReference>
<dbReference type="GO" id="GO:0006633">
    <property type="term" value="P:fatty acid biosynthetic process"/>
    <property type="evidence" value="ECO:0007669"/>
    <property type="project" value="UniProtKB-UniPathway"/>
</dbReference>
<dbReference type="GO" id="GO:0008610">
    <property type="term" value="P:lipid biosynthetic process"/>
    <property type="evidence" value="ECO:0000315"/>
    <property type="project" value="UniProtKB"/>
</dbReference>
<dbReference type="CDD" id="cd05195">
    <property type="entry name" value="enoyl_red"/>
    <property type="match status" value="1"/>
</dbReference>
<dbReference type="CDD" id="cd08956">
    <property type="entry name" value="KR_3_FAS_SDR_x"/>
    <property type="match status" value="1"/>
</dbReference>
<dbReference type="CDD" id="cd00833">
    <property type="entry name" value="PKS"/>
    <property type="match status" value="1"/>
</dbReference>
<dbReference type="FunFam" id="3.40.50.720:FF:000209">
    <property type="entry name" value="Polyketide synthase Pks12"/>
    <property type="match status" value="1"/>
</dbReference>
<dbReference type="FunFam" id="3.40.47.10:FF:000019">
    <property type="entry name" value="Polyketide synthase type I"/>
    <property type="match status" value="1"/>
</dbReference>
<dbReference type="FunFam" id="3.40.366.10:FF:000002">
    <property type="entry name" value="Probable polyketide synthase 2"/>
    <property type="match status" value="1"/>
</dbReference>
<dbReference type="FunFam" id="3.10.129.110:FF:000003">
    <property type="entry name" value="Probable polyketide synthase pks1"/>
    <property type="match status" value="1"/>
</dbReference>
<dbReference type="FunFam" id="3.40.50.11460:FF:000001">
    <property type="entry name" value="Probable polyketide synthase pks1"/>
    <property type="match status" value="1"/>
</dbReference>
<dbReference type="FunFam" id="3.90.180.10:FF:000032">
    <property type="entry name" value="Probable polyketide synthase pks1"/>
    <property type="match status" value="1"/>
</dbReference>
<dbReference type="FunFam" id="1.10.1200.10:FF:000007">
    <property type="entry name" value="Probable polyketide synthase pks17"/>
    <property type="match status" value="1"/>
</dbReference>
<dbReference type="FunFam" id="3.40.50.720:FF:000381">
    <property type="entry name" value="Probable polyketide synthase pks17"/>
    <property type="match status" value="1"/>
</dbReference>
<dbReference type="Gene3D" id="3.30.70.3290">
    <property type="match status" value="1"/>
</dbReference>
<dbReference type="Gene3D" id="3.40.47.10">
    <property type="match status" value="1"/>
</dbReference>
<dbReference type="Gene3D" id="3.40.50.11460">
    <property type="match status" value="1"/>
</dbReference>
<dbReference type="Gene3D" id="1.10.1200.10">
    <property type="entry name" value="ACP-like"/>
    <property type="match status" value="1"/>
</dbReference>
<dbReference type="Gene3D" id="3.40.366.10">
    <property type="entry name" value="Malonyl-Coenzyme A Acyl Carrier Protein, domain 2"/>
    <property type="match status" value="1"/>
</dbReference>
<dbReference type="Gene3D" id="3.90.180.10">
    <property type="entry name" value="Medium-chain alcohol dehydrogenases, catalytic domain"/>
    <property type="match status" value="1"/>
</dbReference>
<dbReference type="Gene3D" id="3.40.50.720">
    <property type="entry name" value="NAD(P)-binding Rossmann-like Domain"/>
    <property type="match status" value="1"/>
</dbReference>
<dbReference type="Gene3D" id="3.10.129.110">
    <property type="entry name" value="Polyketide synthase dehydratase"/>
    <property type="match status" value="1"/>
</dbReference>
<dbReference type="InterPro" id="IPR001227">
    <property type="entry name" value="Ac_transferase_dom_sf"/>
</dbReference>
<dbReference type="InterPro" id="IPR036736">
    <property type="entry name" value="ACP-like_sf"/>
</dbReference>
<dbReference type="InterPro" id="IPR014043">
    <property type="entry name" value="Acyl_transferase_dom"/>
</dbReference>
<dbReference type="InterPro" id="IPR016035">
    <property type="entry name" value="Acyl_Trfase/lysoPLipase"/>
</dbReference>
<dbReference type="InterPro" id="IPR013154">
    <property type="entry name" value="ADH-like_N"/>
</dbReference>
<dbReference type="InterPro" id="IPR011032">
    <property type="entry name" value="GroES-like_sf"/>
</dbReference>
<dbReference type="InterPro" id="IPR018201">
    <property type="entry name" value="Ketoacyl_synth_AS"/>
</dbReference>
<dbReference type="InterPro" id="IPR014031">
    <property type="entry name" value="Ketoacyl_synth_C"/>
</dbReference>
<dbReference type="InterPro" id="IPR014030">
    <property type="entry name" value="Ketoacyl_synth_N"/>
</dbReference>
<dbReference type="InterPro" id="IPR016036">
    <property type="entry name" value="Malonyl_transacylase_ACP-bd"/>
</dbReference>
<dbReference type="InterPro" id="IPR036291">
    <property type="entry name" value="NAD(P)-bd_dom_sf"/>
</dbReference>
<dbReference type="InterPro" id="IPR032821">
    <property type="entry name" value="PKS_assoc"/>
</dbReference>
<dbReference type="InterPro" id="IPR020841">
    <property type="entry name" value="PKS_Beta-ketoAc_synthase_dom"/>
</dbReference>
<dbReference type="InterPro" id="IPR042104">
    <property type="entry name" value="PKS_dehydratase_sf"/>
</dbReference>
<dbReference type="InterPro" id="IPR020807">
    <property type="entry name" value="PKS_DH"/>
</dbReference>
<dbReference type="InterPro" id="IPR049551">
    <property type="entry name" value="PKS_DH_C"/>
</dbReference>
<dbReference type="InterPro" id="IPR049552">
    <property type="entry name" value="PKS_DH_N"/>
</dbReference>
<dbReference type="InterPro" id="IPR020843">
    <property type="entry name" value="PKS_ER"/>
</dbReference>
<dbReference type="InterPro" id="IPR013968">
    <property type="entry name" value="PKS_KR"/>
</dbReference>
<dbReference type="InterPro" id="IPR049900">
    <property type="entry name" value="PKS_mFAS_DH"/>
</dbReference>
<dbReference type="InterPro" id="IPR050091">
    <property type="entry name" value="PKS_NRPS_Biosynth_Enz"/>
</dbReference>
<dbReference type="InterPro" id="IPR020806">
    <property type="entry name" value="PKS_PP-bd"/>
</dbReference>
<dbReference type="InterPro" id="IPR036299">
    <property type="entry name" value="Polyketide_synth_docking_sf"/>
</dbReference>
<dbReference type="InterPro" id="IPR009081">
    <property type="entry name" value="PP-bd_ACP"/>
</dbReference>
<dbReference type="InterPro" id="IPR006162">
    <property type="entry name" value="Ppantetheine_attach_site"/>
</dbReference>
<dbReference type="InterPro" id="IPR055123">
    <property type="entry name" value="SpnB-like_Rossmann"/>
</dbReference>
<dbReference type="InterPro" id="IPR016039">
    <property type="entry name" value="Thiolase-like"/>
</dbReference>
<dbReference type="PANTHER" id="PTHR43775">
    <property type="entry name" value="FATTY ACID SYNTHASE"/>
    <property type="match status" value="1"/>
</dbReference>
<dbReference type="PANTHER" id="PTHR43775:SF51">
    <property type="entry name" value="INACTIVE PHENOLPHTHIOCEROL SYNTHESIS POLYKETIDE SYNTHASE TYPE I PKS1-RELATED"/>
    <property type="match status" value="1"/>
</dbReference>
<dbReference type="Pfam" id="PF00698">
    <property type="entry name" value="Acyl_transf_1"/>
    <property type="match status" value="1"/>
</dbReference>
<dbReference type="Pfam" id="PF08240">
    <property type="entry name" value="ADH_N"/>
    <property type="match status" value="1"/>
</dbReference>
<dbReference type="Pfam" id="PF13602">
    <property type="entry name" value="ADH_zinc_N_2"/>
    <property type="match status" value="1"/>
</dbReference>
<dbReference type="Pfam" id="PF16197">
    <property type="entry name" value="KAsynt_C_assoc"/>
    <property type="match status" value="1"/>
</dbReference>
<dbReference type="Pfam" id="PF00109">
    <property type="entry name" value="ketoacyl-synt"/>
    <property type="match status" value="1"/>
</dbReference>
<dbReference type="Pfam" id="PF02801">
    <property type="entry name" value="Ketoacyl-synt_C"/>
    <property type="match status" value="1"/>
</dbReference>
<dbReference type="Pfam" id="PF08659">
    <property type="entry name" value="KR"/>
    <property type="match status" value="1"/>
</dbReference>
<dbReference type="Pfam" id="PF21089">
    <property type="entry name" value="PKS_DH_N"/>
    <property type="match status" value="1"/>
</dbReference>
<dbReference type="Pfam" id="PF00550">
    <property type="entry name" value="PP-binding"/>
    <property type="match status" value="1"/>
</dbReference>
<dbReference type="Pfam" id="PF14765">
    <property type="entry name" value="PS-DH"/>
    <property type="match status" value="1"/>
</dbReference>
<dbReference type="Pfam" id="PF22953">
    <property type="entry name" value="SpnB_Rossmann"/>
    <property type="match status" value="1"/>
</dbReference>
<dbReference type="SMART" id="SM00827">
    <property type="entry name" value="PKS_AT"/>
    <property type="match status" value="1"/>
</dbReference>
<dbReference type="SMART" id="SM00826">
    <property type="entry name" value="PKS_DH"/>
    <property type="match status" value="1"/>
</dbReference>
<dbReference type="SMART" id="SM00829">
    <property type="entry name" value="PKS_ER"/>
    <property type="match status" value="1"/>
</dbReference>
<dbReference type="SMART" id="SM00822">
    <property type="entry name" value="PKS_KR"/>
    <property type="match status" value="1"/>
</dbReference>
<dbReference type="SMART" id="SM00825">
    <property type="entry name" value="PKS_KS"/>
    <property type="match status" value="1"/>
</dbReference>
<dbReference type="SMART" id="SM00823">
    <property type="entry name" value="PKS_PP"/>
    <property type="match status" value="1"/>
</dbReference>
<dbReference type="SMART" id="SM01294">
    <property type="entry name" value="PKS_PP_betabranch"/>
    <property type="match status" value="1"/>
</dbReference>
<dbReference type="SUPFAM" id="SSF47336">
    <property type="entry name" value="ACP-like"/>
    <property type="match status" value="1"/>
</dbReference>
<dbReference type="SUPFAM" id="SSF101173">
    <property type="entry name" value="Docking domain B of the erythromycin polyketide synthase (DEBS)"/>
    <property type="match status" value="1"/>
</dbReference>
<dbReference type="SUPFAM" id="SSF52151">
    <property type="entry name" value="FabD/lysophospholipase-like"/>
    <property type="match status" value="1"/>
</dbReference>
<dbReference type="SUPFAM" id="SSF50129">
    <property type="entry name" value="GroES-like"/>
    <property type="match status" value="1"/>
</dbReference>
<dbReference type="SUPFAM" id="SSF51735">
    <property type="entry name" value="NAD(P)-binding Rossmann-fold domains"/>
    <property type="match status" value="3"/>
</dbReference>
<dbReference type="SUPFAM" id="SSF55048">
    <property type="entry name" value="Probable ACP-binding domain of malonyl-CoA ACP transacylase"/>
    <property type="match status" value="1"/>
</dbReference>
<dbReference type="SUPFAM" id="SSF53901">
    <property type="entry name" value="Thiolase-like"/>
    <property type="match status" value="1"/>
</dbReference>
<dbReference type="PROSITE" id="PS50075">
    <property type="entry name" value="CARRIER"/>
    <property type="match status" value="1"/>
</dbReference>
<dbReference type="PROSITE" id="PS00606">
    <property type="entry name" value="KS3_1"/>
    <property type="match status" value="1"/>
</dbReference>
<dbReference type="PROSITE" id="PS52004">
    <property type="entry name" value="KS3_2"/>
    <property type="match status" value="1"/>
</dbReference>
<dbReference type="PROSITE" id="PS00012">
    <property type="entry name" value="PHOSPHOPANTETHEINE"/>
    <property type="match status" value="1"/>
</dbReference>
<dbReference type="PROSITE" id="PS52019">
    <property type="entry name" value="PKS_MFAS_DH"/>
    <property type="match status" value="1"/>
</dbReference>
<reference key="1">
    <citation type="journal article" date="2003" name="Proc. Natl. Acad. Sci. U.S.A.">
        <title>The complete genome sequence of Mycobacterium bovis.</title>
        <authorList>
            <person name="Garnier T."/>
            <person name="Eiglmeier K."/>
            <person name="Camus J.-C."/>
            <person name="Medina N."/>
            <person name="Mansoor H."/>
            <person name="Pryor M."/>
            <person name="Duthoy S."/>
            <person name="Grondin S."/>
            <person name="Lacroix C."/>
            <person name="Monsempe C."/>
            <person name="Simon S."/>
            <person name="Harris B."/>
            <person name="Atkin R."/>
            <person name="Doggett J."/>
            <person name="Mayes R."/>
            <person name="Keating L."/>
            <person name="Wheeler P.R."/>
            <person name="Parkhill J."/>
            <person name="Barrell B.G."/>
            <person name="Cole S.T."/>
            <person name="Gordon S.V."/>
            <person name="Hewinson R.G."/>
        </authorList>
    </citation>
    <scope>NUCLEOTIDE SEQUENCE [LARGE SCALE GENOMIC DNA]</scope>
    <source>
        <strain>ATCC BAA-935 / AF2122/97</strain>
    </source>
</reference>
<reference key="2">
    <citation type="journal article" date="2017" name="Genome Announc.">
        <title>Updated reference genome sequence and annotation of Mycobacterium bovis AF2122/97.</title>
        <authorList>
            <person name="Malone K.M."/>
            <person name="Farrell D."/>
            <person name="Stuber T.P."/>
            <person name="Schubert O.T."/>
            <person name="Aebersold R."/>
            <person name="Robbe-Austerman S."/>
            <person name="Gordon S.V."/>
        </authorList>
    </citation>
    <scope>NUCLEOTIDE SEQUENCE [LARGE SCALE GENOMIC DNA]</scope>
    <scope>GENOME REANNOTATION</scope>
    <source>
        <strain>ATCC BAA-935 / AF2122/97</strain>
    </source>
</reference>
<reference key="3">
    <citation type="journal article" date="2002" name="J. Biol. Chem.">
        <title>Role of the pks15/1 gene in the biosynthesis of phenolglycolipids in the Mycobacterium tuberculosis complex. Evidence that all strains synthesize glycosylated p-hydroxybenzoic methyl esters and that strains devoid of phenolglycolipids harbor a frameshift mutation in the pks15/1 gene.</title>
        <authorList>
            <person name="Constant P."/>
            <person name="Perez E."/>
            <person name="Malaga W."/>
            <person name="Laneelle M.A."/>
            <person name="Saurel O."/>
            <person name="Daffe M."/>
            <person name="Guilhot C."/>
        </authorList>
    </citation>
    <scope>FUNCTION IN PHENOLPHTHIOCEROL BIOSYNTHESIS</scope>
    <scope>DISRUPTION PHENOTYPE</scope>
    <source>
        <strain>ATCC BAA-935 / AF2122/97</strain>
    </source>
</reference>
<gene>
    <name type="primary">pks15/1</name>
    <name type="synonym">msl7</name>
    <name type="synonym">pks1</name>
    <name type="ordered locus">BQ2027_MB2971C</name>
</gene>
<protein>
    <recommendedName>
        <fullName>Phenolphthiocerol synthesis polyketide synthase type I Pks15/1</fullName>
    </recommendedName>
    <alternativeName>
        <fullName>Beta-ketoacyl-acyl-carrier-protein synthase I</fullName>
        <ecNumber>2.3.1.41</ecNumber>
    </alternativeName>
</protein>
<name>MSL7_MYCBO</name>
<feature type="chain" id="PRO_0000406362" description="Phenolphthiocerol synthesis polyketide synthase type I Pks15/1">
    <location>
        <begin position="1"/>
        <end position="2112"/>
    </location>
</feature>
<feature type="domain" description="Ketosynthase family 3 (KS3)" evidence="3">
    <location>
        <begin position="46"/>
        <end position="469"/>
    </location>
</feature>
<feature type="domain" description="PKS/mFAS DH" evidence="4">
    <location>
        <begin position="941"/>
        <end position="1215"/>
    </location>
</feature>
<feature type="domain" description="Carrier" evidence="2">
    <location>
        <begin position="2010"/>
        <end position="2085"/>
    </location>
</feature>
<feature type="region of interest" description="Acyltransferase" evidence="1">
    <location>
        <begin position="579"/>
        <end position="893"/>
    </location>
</feature>
<feature type="region of interest" description="Dehydratase" evidence="1">
    <location>
        <begin position="941"/>
        <end position="1101"/>
    </location>
</feature>
<feature type="region of interest" description="N-terminal hotdog fold" evidence="4">
    <location>
        <begin position="941"/>
        <end position="1063"/>
    </location>
</feature>
<feature type="region of interest" description="C-terminal hotdog fold" evidence="4">
    <location>
        <begin position="1075"/>
        <end position="1215"/>
    </location>
</feature>
<feature type="region of interest" description="Enoylreductase" evidence="1">
    <location>
        <begin position="1406"/>
        <end position="1711"/>
    </location>
</feature>
<feature type="region of interest" description="Beta-ketoacyl reductase" evidence="1">
    <location>
        <begin position="1724"/>
        <end position="1905"/>
    </location>
</feature>
<feature type="region of interest" description="Disordered" evidence="6">
    <location>
        <begin position="2084"/>
        <end position="2112"/>
    </location>
</feature>
<feature type="compositionally biased region" description="Polar residues" evidence="6">
    <location>
        <begin position="2084"/>
        <end position="2100"/>
    </location>
</feature>
<feature type="active site" description="For beta-ketoacyl synthase activity" evidence="3">
    <location>
        <position position="216"/>
    </location>
</feature>
<feature type="active site" description="For beta-ketoacyl synthase activity" evidence="3">
    <location>
        <position position="351"/>
    </location>
</feature>
<feature type="active site" description="For beta-ketoacyl synthase activity" evidence="3">
    <location>
        <position position="391"/>
    </location>
</feature>
<feature type="active site" description="For acyltransferase activity" evidence="5">
    <location>
        <position position="670"/>
    </location>
</feature>
<feature type="active site" description="Proton acceptor; for dehydratase activity" evidence="4">
    <location>
        <position position="973"/>
    </location>
</feature>
<feature type="active site" description="Proton donor; for dehydratase activity" evidence="4">
    <location>
        <position position="1136"/>
    </location>
</feature>
<feature type="binding site" evidence="1">
    <location>
        <begin position="1536"/>
        <end position="1553"/>
    </location>
    <ligand>
        <name>NADP(+)</name>
        <dbReference type="ChEBI" id="CHEBI:58349"/>
    </ligand>
</feature>
<feature type="binding site" evidence="1">
    <location>
        <begin position="1725"/>
        <end position="1740"/>
    </location>
    <ligand>
        <name>NADP(+)</name>
        <dbReference type="ChEBI" id="CHEBI:58349"/>
    </ligand>
</feature>
<feature type="modified residue" description="O-(pantetheine 4'-phosphoryl)serine" evidence="2">
    <location>
        <position position="2045"/>
    </location>
</feature>
<organism>
    <name type="scientific">Mycobacterium bovis (strain ATCC BAA-935 / AF2122/97)</name>
    <dbReference type="NCBI Taxonomy" id="233413"/>
    <lineage>
        <taxon>Bacteria</taxon>
        <taxon>Bacillati</taxon>
        <taxon>Actinomycetota</taxon>
        <taxon>Actinomycetes</taxon>
        <taxon>Mycobacteriales</taxon>
        <taxon>Mycobacteriaceae</taxon>
        <taxon>Mycobacterium</taxon>
        <taxon>Mycobacterium tuberculosis complex</taxon>
    </lineage>
</organism>
<proteinExistence type="evidence at protein level"/>
<evidence type="ECO:0000250" key="1"/>
<evidence type="ECO:0000255" key="2">
    <source>
        <dbReference type="PROSITE-ProRule" id="PRU00258"/>
    </source>
</evidence>
<evidence type="ECO:0000255" key="3">
    <source>
        <dbReference type="PROSITE-ProRule" id="PRU01348"/>
    </source>
</evidence>
<evidence type="ECO:0000255" key="4">
    <source>
        <dbReference type="PROSITE-ProRule" id="PRU01363"/>
    </source>
</evidence>
<evidence type="ECO:0000255" key="5">
    <source>
        <dbReference type="PROSITE-ProRule" id="PRU10022"/>
    </source>
</evidence>
<evidence type="ECO:0000256" key="6">
    <source>
        <dbReference type="SAM" id="MobiDB-lite"/>
    </source>
</evidence>
<evidence type="ECO:0000269" key="7">
    <source>
    </source>
</evidence>
<evidence type="ECO:0000305" key="8"/>
<sequence length="2112" mass="218304">MIEEQRTMSVEGADQQSEKLFHYLKKVAVELDETRARLREYEQRATEPVAVVGIGCRFPGGVDGPDGLWDVVSAGRDVVSEFPTDRGWDVEGLYDPDPDAEGKTYTRWGAFLDDATGFDAGFFGIAPSEVLAMDPQQRLMLEVSWEALEHAGIDPLSLRGSATGVYTGIFAASYGNRDTGGLQGYGLTGTSISVASGRVSYVLGLQGPAVSVDTACSSSLVAIHWAMSSLRSGECDLALAGGVTVMGLPSIFVGFSRQRGLAADGRCKAFAAAADGTGWGEGAGVVVLERLSDARRLGHSVLAVVRGSAVNQDGASNGLTAPNGLAQQRVIQAALANAGLSAADVDVVEAHGTATTLGDPIEAQALLSTYGQGRPAEQPLWVGSIKSNMGHTQAAAGVAGVIKMVQAMRHGVMPATLHVDEPSPRVDWTSGAVSVLTEAREWSVDGRPRRAAVSSFGISGTNAHLILEEAPVPAPAEAPVEASESTGGPRPSMVPWVISARSAEALTAQAGRLMAHVQANPGLDPIDVGCSLASRSVFEHRAVVVGASREQLIAGLAGLAAGEPGAGVAVGQPGSVGKTVVVFPGQGAQRIGMGRELYGELPVFAQAFDAVADELDRHLRLPLRDVIWGADADLLDSTEFAQPALFAVEVASFAVLRDWGVLPDFVMGHSVGELAAAHAAGVLTLADAAMLVVARGRLMQALPAGGAMVAVAASEDEVEPLLGEGVGIAAINAPESVVISGAQAAANAIADRFAAQGRRVHQLAVSHAFHSPLMEPMLEEFARVAARVQAREPQLGLVSNVTGELAGPDFGSAQYWVDHVRRPVRFADSARHLQTLGATHFIEAGPGSGLTGSIEQSLAPAEAMVVSMLGKDRPELASALGAAGQVFTTGVPVQWSAVFAGSGGRRVQLPTYAFQRRRFWETPGADGPADAAGLGLGATEHALLGAVVERPDSDEVVLTGRLSLADQPWLADHVVNGVVLFPGAGFVELVIRAGDEVGCALIEELVLAAPLVMHPGVGVQVQVVVGAADESGHRAVSVYSRGDQSQGWLLNAEGMLGVAAAETPMDLSVWPPEGAESVDISDGYAQLAERGYAYGPAFQGLVAIWRRGSELFAEVVAPGEAGVAVDRMGMHPAVLDAVLHALGLAVEKTQASTETRLPFCWRGVSLHAGGAGRVRARFASAGADAISVDVCDATGLPVLTVRSLVTRPITAEQLRAAVTAAGGASDQGPLEVVWSPISVVSGGANGSAPPAPVSWADFCAGSDGDASVVVWELESAGGQASSVVGSVYAATHTALEVLQSWLGADRAATLVVLTHGGVGLAGEDISDLAAAAVWGMARSAQAENPGRIVLIDTDAAVDASVLAGVGEPQLLVRGGTVHAPRLSPAPALLALPAAESAWRLAAGGGGTLEDLVIQPCPEVQAPLQAGQVRVAVAAVGVNFRDVVAALGMYPGQAPPLGAEGAGVVLETGPEVTDLAVGDAVMGFLGGAGPLAVVDQQLVTRVPQGWSFAQAAAVPVVFLTAWYGLADLAEIKAGESVLIHAGTGGVGMAAVQLARQWGVEVFVTASRGKWDTLRAMGFDDDHIGDSRTCEFEEKFLAVTEGRGVDVVLDSLAGEFVDASLRLLVRGGRFLEMGKTDIRDAQEIAANYPGVQYRAFDLSEAGPARMQEMLAEVRELFDTRELHRLPVTTWDVRCAPAAFRFMSQARHIGKVVLTMPSALADRLADGTVVITGATGAVGGVLARHLVGAYGVRHLVLASRRGDRAEGAAELAADLTEAGAKGQVVACDVADRAAVAGLFAQLSREYPPVRGVIHAAGVLDDAVITSLTPDRIDTVLRAKVDAAWNLHQATSDLDLSMFVLCSSIAATVGSPGQGNYSAANAFLDGLAAHRQAAGLAGISLAWGLWEQPGGMTAHLSSRDLARMSRSGLAPMSPAEAVELFDAALAIDHPLAVATLLDRAALDARAQAGALPALFSGLARRPRRRQIDDTGDATSSKSALAQRLHGLAADEQLELLVGLVCLQAAAVLGRPSAEDVDPDTEFGDLGFDSLTAVELRNRLKTATGLTLPPTVIFDHPTPTAVAEYVAQQMSGSRPTESGDPTSQVVEPAAAEVSVHA</sequence>
<comment type="function">
    <text evidence="7">Catalyzes the elongation by iterative transfer of p-hydroxybenzoyl group from FadD22 (pHBA-S-FAdD22) to form p-hydroxyphenylalkanoate (pHPA) intermediates during phenolphthiocerol (PPOL) biosynthesis. PPOL is an important intermediate in the biosynthesis of phenolic glycolipid (mycosid B).</text>
</comment>
<comment type="catalytic activity">
    <reaction evidence="5">
        <text>a fatty acyl-[ACP] + malonyl-[ACP] + H(+) = a 3-oxoacyl-[ACP] + holo-[ACP] + CO2</text>
        <dbReference type="Rhea" id="RHEA:22836"/>
        <dbReference type="Rhea" id="RHEA-COMP:9623"/>
        <dbReference type="Rhea" id="RHEA-COMP:9685"/>
        <dbReference type="Rhea" id="RHEA-COMP:9916"/>
        <dbReference type="Rhea" id="RHEA-COMP:14125"/>
        <dbReference type="ChEBI" id="CHEBI:15378"/>
        <dbReference type="ChEBI" id="CHEBI:16526"/>
        <dbReference type="ChEBI" id="CHEBI:64479"/>
        <dbReference type="ChEBI" id="CHEBI:78449"/>
        <dbReference type="ChEBI" id="CHEBI:78776"/>
        <dbReference type="ChEBI" id="CHEBI:138651"/>
        <dbReference type="EC" id="2.3.1.41"/>
    </reaction>
</comment>
<comment type="cofactor">
    <cofactor evidence="1">
        <name>pantetheine 4'-phosphate</name>
        <dbReference type="ChEBI" id="CHEBI:47942"/>
    </cofactor>
    <text evidence="1">Binds 1 phosphopantetheine covalently.</text>
</comment>
<comment type="pathway">
    <text>Lipid metabolism; fatty acid biosynthesis.</text>
</comment>
<comment type="disruption phenotype">
    <text evidence="7">Disruption of pks15/1 abolishes the production of phenolphthiocerol.</text>
</comment>
<comment type="similarity">
    <text evidence="8">Belongs to the thiolase-like superfamily. Beta-ketoacyl-ACP synthases family.</text>
</comment>